<dbReference type="EMBL" id="CP000551">
    <property type="protein sequence ID" value="ABM71028.1"/>
    <property type="molecule type" value="Genomic_DNA"/>
</dbReference>
<dbReference type="RefSeq" id="WP_011819152.1">
    <property type="nucleotide sequence ID" value="NC_008816.1"/>
</dbReference>
<dbReference type="SMR" id="A2BTB7"/>
<dbReference type="STRING" id="146891.A9601_17451"/>
<dbReference type="KEGG" id="pmb:A9601_17451"/>
<dbReference type="eggNOG" id="COG0099">
    <property type="taxonomic scope" value="Bacteria"/>
</dbReference>
<dbReference type="HOGENOM" id="CLU_103849_1_2_3"/>
<dbReference type="OrthoDB" id="9803610at2"/>
<dbReference type="Proteomes" id="UP000002590">
    <property type="component" value="Chromosome"/>
</dbReference>
<dbReference type="GO" id="GO:0005829">
    <property type="term" value="C:cytosol"/>
    <property type="evidence" value="ECO:0007669"/>
    <property type="project" value="TreeGrafter"/>
</dbReference>
<dbReference type="GO" id="GO:0015935">
    <property type="term" value="C:small ribosomal subunit"/>
    <property type="evidence" value="ECO:0007669"/>
    <property type="project" value="TreeGrafter"/>
</dbReference>
<dbReference type="GO" id="GO:0019843">
    <property type="term" value="F:rRNA binding"/>
    <property type="evidence" value="ECO:0007669"/>
    <property type="project" value="UniProtKB-UniRule"/>
</dbReference>
<dbReference type="GO" id="GO:0003735">
    <property type="term" value="F:structural constituent of ribosome"/>
    <property type="evidence" value="ECO:0007669"/>
    <property type="project" value="InterPro"/>
</dbReference>
<dbReference type="GO" id="GO:0000049">
    <property type="term" value="F:tRNA binding"/>
    <property type="evidence" value="ECO:0007669"/>
    <property type="project" value="UniProtKB-UniRule"/>
</dbReference>
<dbReference type="GO" id="GO:0006412">
    <property type="term" value="P:translation"/>
    <property type="evidence" value="ECO:0007669"/>
    <property type="project" value="UniProtKB-UniRule"/>
</dbReference>
<dbReference type="FunFam" id="1.10.8.50:FF:000001">
    <property type="entry name" value="30S ribosomal protein S13"/>
    <property type="match status" value="1"/>
</dbReference>
<dbReference type="Gene3D" id="1.10.8.50">
    <property type="match status" value="1"/>
</dbReference>
<dbReference type="Gene3D" id="4.10.910.10">
    <property type="entry name" value="30s ribosomal protein s13, domain 2"/>
    <property type="match status" value="1"/>
</dbReference>
<dbReference type="HAMAP" id="MF_01315">
    <property type="entry name" value="Ribosomal_uS13"/>
    <property type="match status" value="1"/>
</dbReference>
<dbReference type="InterPro" id="IPR027437">
    <property type="entry name" value="Rbsml_uS13_C"/>
</dbReference>
<dbReference type="InterPro" id="IPR001892">
    <property type="entry name" value="Ribosomal_uS13"/>
</dbReference>
<dbReference type="InterPro" id="IPR010979">
    <property type="entry name" value="Ribosomal_uS13-like_H2TH"/>
</dbReference>
<dbReference type="InterPro" id="IPR019980">
    <property type="entry name" value="Ribosomal_uS13_bac-type"/>
</dbReference>
<dbReference type="InterPro" id="IPR018269">
    <property type="entry name" value="Ribosomal_uS13_CS"/>
</dbReference>
<dbReference type="NCBIfam" id="TIGR03631">
    <property type="entry name" value="uS13_bact"/>
    <property type="match status" value="1"/>
</dbReference>
<dbReference type="PANTHER" id="PTHR10871">
    <property type="entry name" value="30S RIBOSOMAL PROTEIN S13/40S RIBOSOMAL PROTEIN S18"/>
    <property type="match status" value="1"/>
</dbReference>
<dbReference type="PANTHER" id="PTHR10871:SF1">
    <property type="entry name" value="SMALL RIBOSOMAL SUBUNIT PROTEIN US13M"/>
    <property type="match status" value="1"/>
</dbReference>
<dbReference type="Pfam" id="PF00416">
    <property type="entry name" value="Ribosomal_S13"/>
    <property type="match status" value="1"/>
</dbReference>
<dbReference type="PIRSF" id="PIRSF002134">
    <property type="entry name" value="Ribosomal_S13"/>
    <property type="match status" value="1"/>
</dbReference>
<dbReference type="SUPFAM" id="SSF46946">
    <property type="entry name" value="S13-like H2TH domain"/>
    <property type="match status" value="1"/>
</dbReference>
<dbReference type="PROSITE" id="PS00646">
    <property type="entry name" value="RIBOSOMAL_S13_1"/>
    <property type="match status" value="1"/>
</dbReference>
<dbReference type="PROSITE" id="PS50159">
    <property type="entry name" value="RIBOSOMAL_S13_2"/>
    <property type="match status" value="1"/>
</dbReference>
<reference key="1">
    <citation type="journal article" date="2007" name="PLoS Genet.">
        <title>Patterns and implications of gene gain and loss in the evolution of Prochlorococcus.</title>
        <authorList>
            <person name="Kettler G.C."/>
            <person name="Martiny A.C."/>
            <person name="Huang K."/>
            <person name="Zucker J."/>
            <person name="Coleman M.L."/>
            <person name="Rodrigue S."/>
            <person name="Chen F."/>
            <person name="Lapidus A."/>
            <person name="Ferriera S."/>
            <person name="Johnson J."/>
            <person name="Steglich C."/>
            <person name="Church G.M."/>
            <person name="Richardson P."/>
            <person name="Chisholm S.W."/>
        </authorList>
    </citation>
    <scope>NUCLEOTIDE SEQUENCE [LARGE SCALE GENOMIC DNA]</scope>
    <source>
        <strain>AS9601</strain>
    </source>
</reference>
<proteinExistence type="inferred from homology"/>
<name>RS13_PROMS</name>
<evidence type="ECO:0000255" key="1">
    <source>
        <dbReference type="HAMAP-Rule" id="MF_01315"/>
    </source>
</evidence>
<evidence type="ECO:0000256" key="2">
    <source>
        <dbReference type="SAM" id="MobiDB-lite"/>
    </source>
</evidence>
<evidence type="ECO:0000305" key="3"/>
<gene>
    <name evidence="1" type="primary">rpsM</name>
    <name evidence="1" type="synonym">rps13</name>
    <name type="ordered locus">A9601_17451</name>
</gene>
<sequence length="121" mass="13657">MARIAGIDIPREKRVEIALTYVYGIGLTRSKLILANTGVNPDTRVKDLSDGDVQKLRGATEEFTLEGDLRRKEGMALKRLQDIGCVRGRRHRMSLPVRGQRTRTNARTRRGSRKTVAGRKK</sequence>
<comment type="function">
    <text evidence="1">Located at the top of the head of the 30S subunit, it contacts several helices of the 16S rRNA. In the 70S ribosome it contacts the 23S rRNA (bridge B1a) and protein L5 of the 50S subunit (bridge B1b), connecting the 2 subunits; these bridges are implicated in subunit movement. Contacts the tRNAs in the A and P-sites.</text>
</comment>
<comment type="subunit">
    <text evidence="1">Part of the 30S ribosomal subunit. Forms a loose heterodimer with protein S19. Forms two bridges to the 50S subunit in the 70S ribosome.</text>
</comment>
<comment type="similarity">
    <text evidence="1">Belongs to the universal ribosomal protein uS13 family.</text>
</comment>
<protein>
    <recommendedName>
        <fullName evidence="1">Small ribosomal subunit protein uS13</fullName>
    </recommendedName>
    <alternativeName>
        <fullName evidence="3">30S ribosomal protein S13</fullName>
    </alternativeName>
</protein>
<accession>A2BTB7</accession>
<feature type="chain" id="PRO_0000306674" description="Small ribosomal subunit protein uS13">
    <location>
        <begin position="1"/>
        <end position="121"/>
    </location>
</feature>
<feature type="region of interest" description="Disordered" evidence="2">
    <location>
        <begin position="91"/>
        <end position="121"/>
    </location>
</feature>
<feature type="compositionally biased region" description="Basic residues" evidence="2">
    <location>
        <begin position="100"/>
        <end position="121"/>
    </location>
</feature>
<organism>
    <name type="scientific">Prochlorococcus marinus (strain AS9601)</name>
    <dbReference type="NCBI Taxonomy" id="146891"/>
    <lineage>
        <taxon>Bacteria</taxon>
        <taxon>Bacillati</taxon>
        <taxon>Cyanobacteriota</taxon>
        <taxon>Cyanophyceae</taxon>
        <taxon>Synechococcales</taxon>
        <taxon>Prochlorococcaceae</taxon>
        <taxon>Prochlorococcus</taxon>
    </lineage>
</organism>
<keyword id="KW-0687">Ribonucleoprotein</keyword>
<keyword id="KW-0689">Ribosomal protein</keyword>
<keyword id="KW-0694">RNA-binding</keyword>
<keyword id="KW-0699">rRNA-binding</keyword>
<keyword id="KW-0820">tRNA-binding</keyword>